<evidence type="ECO:0000255" key="1">
    <source>
        <dbReference type="HAMAP-Rule" id="MF_01006"/>
    </source>
</evidence>
<organism>
    <name type="scientific">Mycolicibacterium smegmatis (strain ATCC 700084 / mc(2)155)</name>
    <name type="common">Mycobacterium smegmatis</name>
    <dbReference type="NCBI Taxonomy" id="246196"/>
    <lineage>
        <taxon>Bacteria</taxon>
        <taxon>Bacillati</taxon>
        <taxon>Actinomycetota</taxon>
        <taxon>Actinomycetes</taxon>
        <taxon>Mycobacteriales</taxon>
        <taxon>Mycobacteriaceae</taxon>
        <taxon>Mycolicibacterium</taxon>
    </lineage>
</organism>
<proteinExistence type="inferred from homology"/>
<feature type="chain" id="PRO_0000303030" description="Undecaprenyl-diphosphatase">
    <location>
        <begin position="1"/>
        <end position="276"/>
    </location>
</feature>
<feature type="transmembrane region" description="Helical" evidence="1">
    <location>
        <begin position="1"/>
        <end position="21"/>
    </location>
</feature>
<feature type="transmembrane region" description="Helical" evidence="1">
    <location>
        <begin position="39"/>
        <end position="59"/>
    </location>
</feature>
<feature type="transmembrane region" description="Helical" evidence="1">
    <location>
        <begin position="84"/>
        <end position="104"/>
    </location>
</feature>
<feature type="transmembrane region" description="Helical" evidence="1">
    <location>
        <begin position="115"/>
        <end position="135"/>
    </location>
</feature>
<feature type="transmembrane region" description="Helical" evidence="1">
    <location>
        <begin position="159"/>
        <end position="179"/>
    </location>
</feature>
<feature type="transmembrane region" description="Helical" evidence="1">
    <location>
        <begin position="188"/>
        <end position="208"/>
    </location>
</feature>
<feature type="transmembrane region" description="Helical" evidence="1">
    <location>
        <begin position="222"/>
        <end position="242"/>
    </location>
</feature>
<feature type="transmembrane region" description="Helical" evidence="1">
    <location>
        <begin position="253"/>
        <end position="273"/>
    </location>
</feature>
<gene>
    <name evidence="1" type="primary">uppP</name>
    <name type="ordered locus">MSMEG_4194</name>
    <name type="ordered locus">MSMEI_4096</name>
</gene>
<protein>
    <recommendedName>
        <fullName evidence="1">Undecaprenyl-diphosphatase</fullName>
        <ecNumber evidence="1">3.6.1.27</ecNumber>
    </recommendedName>
    <alternativeName>
        <fullName evidence="1">Bacitracin resistance protein</fullName>
    </alternativeName>
    <alternativeName>
        <fullName evidence="1">Undecaprenyl pyrophosphate phosphatase</fullName>
    </alternativeName>
</protein>
<keyword id="KW-0046">Antibiotic resistance</keyword>
<keyword id="KW-1003">Cell membrane</keyword>
<keyword id="KW-0133">Cell shape</keyword>
<keyword id="KW-0961">Cell wall biogenesis/degradation</keyword>
<keyword id="KW-0378">Hydrolase</keyword>
<keyword id="KW-0472">Membrane</keyword>
<keyword id="KW-0573">Peptidoglycan synthesis</keyword>
<keyword id="KW-1185">Reference proteome</keyword>
<keyword id="KW-0812">Transmembrane</keyword>
<keyword id="KW-1133">Transmembrane helix</keyword>
<comment type="function">
    <text evidence="1">Catalyzes the dephosphorylation of undecaprenyl diphosphate (UPP). Confers resistance to bacitracin.</text>
</comment>
<comment type="catalytic activity">
    <reaction evidence="1">
        <text>di-trans,octa-cis-undecaprenyl diphosphate + H2O = di-trans,octa-cis-undecaprenyl phosphate + phosphate + H(+)</text>
        <dbReference type="Rhea" id="RHEA:28094"/>
        <dbReference type="ChEBI" id="CHEBI:15377"/>
        <dbReference type="ChEBI" id="CHEBI:15378"/>
        <dbReference type="ChEBI" id="CHEBI:43474"/>
        <dbReference type="ChEBI" id="CHEBI:58405"/>
        <dbReference type="ChEBI" id="CHEBI:60392"/>
        <dbReference type="EC" id="3.6.1.27"/>
    </reaction>
</comment>
<comment type="subcellular location">
    <subcellularLocation>
        <location evidence="1">Cell membrane</location>
        <topology evidence="1">Multi-pass membrane protein</topology>
    </subcellularLocation>
</comment>
<comment type="miscellaneous">
    <text>Bacitracin is thought to be involved in the inhibition of peptidoglycan synthesis by sequestering undecaprenyl diphosphate, thereby reducing the pool of lipid carrier available.</text>
</comment>
<comment type="similarity">
    <text evidence="1">Belongs to the UppP family.</text>
</comment>
<accession>A0QZY5</accession>
<accession>I7GD14</accession>
<reference key="1">
    <citation type="submission" date="2006-10" db="EMBL/GenBank/DDBJ databases">
        <authorList>
            <person name="Fleischmann R.D."/>
            <person name="Dodson R.J."/>
            <person name="Haft D.H."/>
            <person name="Merkel J.S."/>
            <person name="Nelson W.C."/>
            <person name="Fraser C.M."/>
        </authorList>
    </citation>
    <scope>NUCLEOTIDE SEQUENCE [LARGE SCALE GENOMIC DNA]</scope>
    <source>
        <strain>ATCC 700084 / mc(2)155</strain>
    </source>
</reference>
<reference key="2">
    <citation type="journal article" date="2007" name="Genome Biol.">
        <title>Interrupted coding sequences in Mycobacterium smegmatis: authentic mutations or sequencing errors?</title>
        <authorList>
            <person name="Deshayes C."/>
            <person name="Perrodou E."/>
            <person name="Gallien S."/>
            <person name="Euphrasie D."/>
            <person name="Schaeffer C."/>
            <person name="Van-Dorsselaer A."/>
            <person name="Poch O."/>
            <person name="Lecompte O."/>
            <person name="Reyrat J.-M."/>
        </authorList>
    </citation>
    <scope>NUCLEOTIDE SEQUENCE [LARGE SCALE GENOMIC DNA]</scope>
    <source>
        <strain>ATCC 700084 / mc(2)155</strain>
    </source>
</reference>
<reference key="3">
    <citation type="journal article" date="2009" name="Genome Res.">
        <title>Ortho-proteogenomics: multiple proteomes investigation through orthology and a new MS-based protocol.</title>
        <authorList>
            <person name="Gallien S."/>
            <person name="Perrodou E."/>
            <person name="Carapito C."/>
            <person name="Deshayes C."/>
            <person name="Reyrat J.-M."/>
            <person name="Van Dorsselaer A."/>
            <person name="Poch O."/>
            <person name="Schaeffer C."/>
            <person name="Lecompte O."/>
        </authorList>
    </citation>
    <scope>NUCLEOTIDE SEQUENCE [LARGE SCALE GENOMIC DNA]</scope>
    <source>
        <strain>ATCC 700084 / mc(2)155</strain>
    </source>
</reference>
<name>UPPP_MYCS2</name>
<dbReference type="EC" id="3.6.1.27" evidence="1"/>
<dbReference type="EMBL" id="CP000480">
    <property type="protein sequence ID" value="ABK73321.1"/>
    <property type="molecule type" value="Genomic_DNA"/>
</dbReference>
<dbReference type="EMBL" id="CP001663">
    <property type="protein sequence ID" value="AFP40554.1"/>
    <property type="molecule type" value="Genomic_DNA"/>
</dbReference>
<dbReference type="RefSeq" id="WP_011729632.1">
    <property type="nucleotide sequence ID" value="NZ_SIJM01000003.1"/>
</dbReference>
<dbReference type="RefSeq" id="YP_888473.1">
    <property type="nucleotide sequence ID" value="NC_008596.1"/>
</dbReference>
<dbReference type="SMR" id="A0QZY5"/>
<dbReference type="STRING" id="246196.MSMEG_4194"/>
<dbReference type="PaxDb" id="246196-MSMEI_4096"/>
<dbReference type="KEGG" id="msb:LJ00_20795"/>
<dbReference type="KEGG" id="msg:MSMEI_4096"/>
<dbReference type="KEGG" id="msm:MSMEG_4194"/>
<dbReference type="PATRIC" id="fig|246196.19.peg.4115"/>
<dbReference type="eggNOG" id="COG1968">
    <property type="taxonomic scope" value="Bacteria"/>
</dbReference>
<dbReference type="OrthoDB" id="9808289at2"/>
<dbReference type="Proteomes" id="UP000000757">
    <property type="component" value="Chromosome"/>
</dbReference>
<dbReference type="Proteomes" id="UP000006158">
    <property type="component" value="Chromosome"/>
</dbReference>
<dbReference type="GO" id="GO:0005886">
    <property type="term" value="C:plasma membrane"/>
    <property type="evidence" value="ECO:0007669"/>
    <property type="project" value="UniProtKB-SubCell"/>
</dbReference>
<dbReference type="GO" id="GO:0050380">
    <property type="term" value="F:undecaprenyl-diphosphatase activity"/>
    <property type="evidence" value="ECO:0007669"/>
    <property type="project" value="UniProtKB-UniRule"/>
</dbReference>
<dbReference type="GO" id="GO:0071555">
    <property type="term" value="P:cell wall organization"/>
    <property type="evidence" value="ECO:0007669"/>
    <property type="project" value="UniProtKB-KW"/>
</dbReference>
<dbReference type="GO" id="GO:0009252">
    <property type="term" value="P:peptidoglycan biosynthetic process"/>
    <property type="evidence" value="ECO:0007669"/>
    <property type="project" value="UniProtKB-KW"/>
</dbReference>
<dbReference type="GO" id="GO:0008360">
    <property type="term" value="P:regulation of cell shape"/>
    <property type="evidence" value="ECO:0007669"/>
    <property type="project" value="UniProtKB-KW"/>
</dbReference>
<dbReference type="GO" id="GO:0046677">
    <property type="term" value="P:response to antibiotic"/>
    <property type="evidence" value="ECO:0007669"/>
    <property type="project" value="UniProtKB-UniRule"/>
</dbReference>
<dbReference type="HAMAP" id="MF_01006">
    <property type="entry name" value="Undec_diphosphatase"/>
    <property type="match status" value="1"/>
</dbReference>
<dbReference type="InterPro" id="IPR003824">
    <property type="entry name" value="UppP"/>
</dbReference>
<dbReference type="NCBIfam" id="NF001392">
    <property type="entry name" value="PRK00281.2-1"/>
    <property type="match status" value="1"/>
</dbReference>
<dbReference type="NCBIfam" id="TIGR00753">
    <property type="entry name" value="undec_PP_bacA"/>
    <property type="match status" value="1"/>
</dbReference>
<dbReference type="PANTHER" id="PTHR30622">
    <property type="entry name" value="UNDECAPRENYL-DIPHOSPHATASE"/>
    <property type="match status" value="1"/>
</dbReference>
<dbReference type="PANTHER" id="PTHR30622:SF4">
    <property type="entry name" value="UNDECAPRENYL-DIPHOSPHATASE"/>
    <property type="match status" value="1"/>
</dbReference>
<dbReference type="Pfam" id="PF02673">
    <property type="entry name" value="BacA"/>
    <property type="match status" value="1"/>
</dbReference>
<sequence>MSWLQVIVLSIVQGLTEFLPVSSSGHLAITSQVFFDDDAGASFTAVTQLGTEFAVLIYFAKDIGRIIKSWFLGLRAPEHRDADYRLGWFVIVGTIPIGVFGLLFKDEIRTGARNLWLVATALIVFSVVIAAAEYYGRQVRQVEQLTWRDSVIVGLAQCLALMPGVSRSGATISAGLFLGLKREVAARFGFLLAIPAVLASGLFSLPDAFHPVGEGMSASGPQLIVATVIAFVVGFAAIAWFLKFLVSHSMYWFVGYRVVLGVVVLALLGTGVLAAQ</sequence>